<protein>
    <recommendedName>
        <fullName>DNA translocase FtsK</fullName>
    </recommendedName>
</protein>
<proteinExistence type="inferred from homology"/>
<comment type="function">
    <text evidence="1">Essential cell division protein that coordinates cell division and chromosome segregation. The N-terminus is involved in assembly of the cell-division machinery. The C-terminus functions as a DNA motor that moves dsDNA in an ATP-dependent manner towards the dif recombination site, which is located within the replication terminus region. Translocation stops specifically at Xer-dif sites, where FtsK interacts with the Xer recombinase, allowing activation of chromosome unlinking by recombination. FtsK orienting polar sequences (KOPS) guide the direction of DNA translocation. FtsK can remove proteins from DNA as it translocates, but translocation stops specifically at XerCD-dif site, thereby preventing removal of XerC and XerD from dif (By similarity).</text>
</comment>
<comment type="subunit">
    <text evidence="1">Homohexamer. Forms a ring that surrounds DNA (By similarity).</text>
</comment>
<comment type="subcellular location">
    <subcellularLocation>
        <location evidence="1">Cell inner membrane</location>
        <topology evidence="1">Multi-pass membrane protein</topology>
    </subcellularLocation>
    <text evidence="1">Located at the septum.</text>
</comment>
<comment type="domain">
    <text evidence="1">Consists of an N-terminal domain, which is sufficient for the localization to the septal ring and is required for cell division, followed by a linker domain, and a C-terminal domain, which forms the translocation motor involved in chromosome segregation. The C-terminal domain can be further subdivided into alpha, beta and gamma subdomains. The alpha and beta subdomains multimerise to produce a hexameric ring, contain the nucleotide binding motif and form the DNA pump. The gamma subdomain is a regulatory subdomain that controls translocation of DNA by recognition of KOPS motifs and interacts with XerD recombinase (By similarity).</text>
</comment>
<comment type="similarity">
    <text evidence="4">Belongs to the FtsK/SpoIIIE/SftA family.</text>
</comment>
<feature type="chain" id="PRO_0000280966" description="DNA translocase FtsK">
    <location>
        <begin position="1"/>
        <end position="749"/>
    </location>
</feature>
<feature type="transmembrane region" description="Helical" evidence="2">
    <location>
        <begin position="13"/>
        <end position="33"/>
    </location>
</feature>
<feature type="transmembrane region" description="Helical" evidence="2">
    <location>
        <begin position="62"/>
        <end position="82"/>
    </location>
</feature>
<feature type="transmembrane region" description="Helical" evidence="2">
    <location>
        <begin position="99"/>
        <end position="119"/>
    </location>
</feature>
<feature type="transmembrane region" description="Helical" evidence="2">
    <location>
        <begin position="142"/>
        <end position="162"/>
    </location>
</feature>
<feature type="topological domain" description="Cytoplasmic" evidence="2">
    <location>
        <begin position="163"/>
        <end position="749"/>
    </location>
</feature>
<feature type="domain" description="FtsK" evidence="3">
    <location>
        <begin position="391"/>
        <end position="610"/>
    </location>
</feature>
<feature type="binding site" evidence="3">
    <location>
        <begin position="411"/>
        <end position="416"/>
    </location>
    <ligand>
        <name>ATP</name>
        <dbReference type="ChEBI" id="CHEBI:30616"/>
    </ligand>
</feature>
<keyword id="KW-0067">ATP-binding</keyword>
<keyword id="KW-0131">Cell cycle</keyword>
<keyword id="KW-0132">Cell division</keyword>
<keyword id="KW-0997">Cell inner membrane</keyword>
<keyword id="KW-1003">Cell membrane</keyword>
<keyword id="KW-0159">Chromosome partition</keyword>
<keyword id="KW-0238">DNA-binding</keyword>
<keyword id="KW-0472">Membrane</keyword>
<keyword id="KW-0547">Nucleotide-binding</keyword>
<keyword id="KW-0812">Transmembrane</keyword>
<keyword id="KW-1133">Transmembrane helix</keyword>
<sequence length="749" mass="83190">MLYYVNKFLSNSKVQAVILGIIGLATISMLVSYKLDDPSFNSATTGYTNNLLGIFGSYLSDFLYQFFGVAAFIIPLSCFIWGKNCWQQKYRKSFIRISVMLLALFSTAALLSNFDLEFVPSNGGGAAGIIIFHFLKQFTNQLHLLLVFFTFIIFVVLFEIKFTSLSSFIIKLGKFLAYKIQTFFYNLFSQLTLPKLFSGKANNKIKITPSYTKPVNEKIRFTEEPKPIMAKPAPVNPIKFFNKPTVPKISQNDATALPPISLLRNPENHHIKGASSSELKQKAEELLTVLNDFGVKGQIINIGQGPVVTLYEFEPAAGTKTSRVVGLSDDIARSLSALSTRIAVVPGKNVLGIELPNKQREFFCLKELIETPEYQDTSTLLPLVLGKDLAGKPLIADLAKMPHLLVAGTTGSGKSVGINAMIVSLLYRYTPEECRFIMIDPKMLELSAYDGIPHLLTPVVTEPAKAVVALKWAVKEMENRYRMMSNIGVKNIAGYNTKIQEAVKEGRIIEKSIQTGFDPETGRPIYETVAMNMEKLPFIAVIVDEMADLMLVAGKDIEMLIQRLAQMARAAGIHIIMATQRPSVDVITGVIKANFPSRISFKVTSKIDSRTILGEQGSEQLLGMGDMLFMGNTSKITRVHGPFVNESEIEQITEYLKETGTPEYISAVTEQSDEDDSSIDIGDGTSDEVLYKKAVQIVRDERKSSISYIQRSLRIGYNKAANLVEKMEKEGIVSPPNHTGKREILLPER</sequence>
<name>FTSK_RICBR</name>
<reference key="1">
    <citation type="journal article" date="2006" name="PLoS Genet.">
        <title>Genome sequence of Rickettsia bellii illuminates the role of amoebae in gene exchanges between intracellular pathogens.</title>
        <authorList>
            <person name="Ogata H."/>
            <person name="La Scola B."/>
            <person name="Audic S."/>
            <person name="Renesto P."/>
            <person name="Blanc G."/>
            <person name="Robert C."/>
            <person name="Fournier P.-E."/>
            <person name="Claverie J.-M."/>
            <person name="Raoult D."/>
        </authorList>
    </citation>
    <scope>NUCLEOTIDE SEQUENCE [LARGE SCALE GENOMIC DNA]</scope>
    <source>
        <strain>RML369-C</strain>
    </source>
</reference>
<accession>Q1RK79</accession>
<organism>
    <name type="scientific">Rickettsia bellii (strain RML369-C)</name>
    <dbReference type="NCBI Taxonomy" id="336407"/>
    <lineage>
        <taxon>Bacteria</taxon>
        <taxon>Pseudomonadati</taxon>
        <taxon>Pseudomonadota</taxon>
        <taxon>Alphaproteobacteria</taxon>
        <taxon>Rickettsiales</taxon>
        <taxon>Rickettsiaceae</taxon>
        <taxon>Rickettsieae</taxon>
        <taxon>Rickettsia</taxon>
        <taxon>belli group</taxon>
    </lineage>
</organism>
<evidence type="ECO:0000250" key="1"/>
<evidence type="ECO:0000255" key="2"/>
<evidence type="ECO:0000255" key="3">
    <source>
        <dbReference type="PROSITE-ProRule" id="PRU00289"/>
    </source>
</evidence>
<evidence type="ECO:0000305" key="4"/>
<dbReference type="EMBL" id="CP000087">
    <property type="protein sequence ID" value="ABE04235.1"/>
    <property type="molecule type" value="Genomic_DNA"/>
</dbReference>
<dbReference type="RefSeq" id="WP_011476850.1">
    <property type="nucleotide sequence ID" value="NC_007940.1"/>
</dbReference>
<dbReference type="SMR" id="Q1RK79"/>
<dbReference type="KEGG" id="rbe:RBE_0154"/>
<dbReference type="eggNOG" id="COG1674">
    <property type="taxonomic scope" value="Bacteria"/>
</dbReference>
<dbReference type="HOGENOM" id="CLU_001981_9_7_5"/>
<dbReference type="OrthoDB" id="9807790at2"/>
<dbReference type="Proteomes" id="UP000001951">
    <property type="component" value="Chromosome"/>
</dbReference>
<dbReference type="GO" id="GO:0005886">
    <property type="term" value="C:plasma membrane"/>
    <property type="evidence" value="ECO:0007669"/>
    <property type="project" value="UniProtKB-SubCell"/>
</dbReference>
<dbReference type="GO" id="GO:0005524">
    <property type="term" value="F:ATP binding"/>
    <property type="evidence" value="ECO:0007669"/>
    <property type="project" value="UniProtKB-KW"/>
</dbReference>
<dbReference type="GO" id="GO:0003677">
    <property type="term" value="F:DNA binding"/>
    <property type="evidence" value="ECO:0007669"/>
    <property type="project" value="UniProtKB-KW"/>
</dbReference>
<dbReference type="GO" id="GO:0051301">
    <property type="term" value="P:cell division"/>
    <property type="evidence" value="ECO:0007669"/>
    <property type="project" value="UniProtKB-KW"/>
</dbReference>
<dbReference type="GO" id="GO:0007059">
    <property type="term" value="P:chromosome segregation"/>
    <property type="evidence" value="ECO:0007669"/>
    <property type="project" value="UniProtKB-KW"/>
</dbReference>
<dbReference type="Gene3D" id="3.30.980.40">
    <property type="match status" value="1"/>
</dbReference>
<dbReference type="Gene3D" id="3.40.50.300">
    <property type="entry name" value="P-loop containing nucleotide triphosphate hydrolases"/>
    <property type="match status" value="1"/>
</dbReference>
<dbReference type="Gene3D" id="1.10.10.10">
    <property type="entry name" value="Winged helix-like DNA-binding domain superfamily/Winged helix DNA-binding domain"/>
    <property type="match status" value="1"/>
</dbReference>
<dbReference type="InterPro" id="IPR050206">
    <property type="entry name" value="FtsK/SpoIIIE/SftA"/>
</dbReference>
<dbReference type="InterPro" id="IPR025199">
    <property type="entry name" value="FtsK_4TM"/>
</dbReference>
<dbReference type="InterPro" id="IPR041027">
    <property type="entry name" value="FtsK_alpha"/>
</dbReference>
<dbReference type="InterPro" id="IPR002543">
    <property type="entry name" value="FtsK_dom"/>
</dbReference>
<dbReference type="InterPro" id="IPR018541">
    <property type="entry name" value="Ftsk_gamma"/>
</dbReference>
<dbReference type="InterPro" id="IPR027417">
    <property type="entry name" value="P-loop_NTPase"/>
</dbReference>
<dbReference type="InterPro" id="IPR036388">
    <property type="entry name" value="WH-like_DNA-bd_sf"/>
</dbReference>
<dbReference type="InterPro" id="IPR036390">
    <property type="entry name" value="WH_DNA-bd_sf"/>
</dbReference>
<dbReference type="PANTHER" id="PTHR22683:SF41">
    <property type="entry name" value="DNA TRANSLOCASE FTSK"/>
    <property type="match status" value="1"/>
</dbReference>
<dbReference type="PANTHER" id="PTHR22683">
    <property type="entry name" value="SPORULATION PROTEIN RELATED"/>
    <property type="match status" value="1"/>
</dbReference>
<dbReference type="Pfam" id="PF13491">
    <property type="entry name" value="FtsK_4TM"/>
    <property type="match status" value="1"/>
</dbReference>
<dbReference type="Pfam" id="PF17854">
    <property type="entry name" value="FtsK_alpha"/>
    <property type="match status" value="1"/>
</dbReference>
<dbReference type="Pfam" id="PF09397">
    <property type="entry name" value="FtsK_gamma"/>
    <property type="match status" value="1"/>
</dbReference>
<dbReference type="Pfam" id="PF01580">
    <property type="entry name" value="FtsK_SpoIIIE"/>
    <property type="match status" value="1"/>
</dbReference>
<dbReference type="SMART" id="SM00843">
    <property type="entry name" value="Ftsk_gamma"/>
    <property type="match status" value="1"/>
</dbReference>
<dbReference type="SUPFAM" id="SSF52540">
    <property type="entry name" value="P-loop containing nucleoside triphosphate hydrolases"/>
    <property type="match status" value="1"/>
</dbReference>
<dbReference type="SUPFAM" id="SSF46785">
    <property type="entry name" value="Winged helix' DNA-binding domain"/>
    <property type="match status" value="1"/>
</dbReference>
<dbReference type="PROSITE" id="PS50901">
    <property type="entry name" value="FTSK"/>
    <property type="match status" value="1"/>
</dbReference>
<gene>
    <name type="primary">ftsK</name>
    <name type="ordered locus">RBE_0154</name>
</gene>